<evidence type="ECO:0000255" key="1">
    <source>
        <dbReference type="HAMAP-Rule" id="MF_01346"/>
    </source>
</evidence>
<sequence length="549" mass="59288">MAELTIPADDIQSAIEEYVSSFTADTSREEVGTVVDAGDGIAHVEGLPSVMTQELLEFPGGILGVALNLDEHSVGAVILGDFENIEEGQQVKRTGEVLSVPVGDGFLGRVVNPLGQPIDGRGDVDSDTRRALELQAPSVVHRQGVKEPLQTGIKAIDAMTPIGRGQRQLIIGDRKTGKTAVCVDTILNQRQNWESGDPKKQVRCVYVAIGQKGTTIAAVRRTLEEGGAMDYTTIVAAAASESAGFKWLAPYTGSAIAQHWMYEGKHVLIIFDDLTKQAEAYRAISLLLRRPPGREAYPGDVFYLHSRLLERCAKLSDDLGGGSLTGLPIIETKANDISAYIPTNVISITDGQCFLETDLFNQGVRPAINVGVSVSRVGGAAQIKAMKEVAGSLRLDLSQYRELEAFAAFASDLDAASKAQLERGARLVELLKQPQSQPMPVEEQVVSIFLGTGGHLDSVPVEDVRRFETELLDHMRASEEEILTEIRDSQKLTEEAADKLTEVIKNFKKGFAATGGGSVVPDEHVEALDEDKLAKEAVKVKKPAPKKKK</sequence>
<feature type="chain" id="PRO_1000166548" description="ATP synthase subunit alpha">
    <location>
        <begin position="1"/>
        <end position="549"/>
    </location>
</feature>
<feature type="binding site" evidence="1">
    <location>
        <begin position="172"/>
        <end position="179"/>
    </location>
    <ligand>
        <name>ATP</name>
        <dbReference type="ChEBI" id="CHEBI:30616"/>
    </ligand>
</feature>
<feature type="site" description="Required for activity" evidence="1">
    <location>
        <position position="373"/>
    </location>
</feature>
<comment type="function">
    <text evidence="1">Produces ATP from ADP in the presence of a proton gradient across the membrane. The alpha chain is a regulatory subunit.</text>
</comment>
<comment type="catalytic activity">
    <reaction evidence="1">
        <text>ATP + H2O + 4 H(+)(in) = ADP + phosphate + 5 H(+)(out)</text>
        <dbReference type="Rhea" id="RHEA:57720"/>
        <dbReference type="ChEBI" id="CHEBI:15377"/>
        <dbReference type="ChEBI" id="CHEBI:15378"/>
        <dbReference type="ChEBI" id="CHEBI:30616"/>
        <dbReference type="ChEBI" id="CHEBI:43474"/>
        <dbReference type="ChEBI" id="CHEBI:456216"/>
        <dbReference type="EC" id="7.1.2.2"/>
    </reaction>
</comment>
<comment type="subunit">
    <text evidence="1">F-type ATPases have 2 components, CF(1) - the catalytic core - and CF(0) - the membrane proton channel. CF(1) has five subunits: alpha(3), beta(3), gamma(1), delta(1), epsilon(1). CF(0) has three main subunits: a(1), b(2) and c(9-12). The alpha and beta chains form an alternating ring which encloses part of the gamma chain. CF(1) is attached to CF(0) by a central stalk formed by the gamma and epsilon chains, while a peripheral stalk is formed by the delta and b chains.</text>
</comment>
<comment type="subcellular location">
    <subcellularLocation>
        <location evidence="1">Cell membrane</location>
        <topology evidence="1">Peripheral membrane protein</topology>
    </subcellularLocation>
</comment>
<comment type="similarity">
    <text evidence="1">Belongs to the ATPase alpha/beta chains family.</text>
</comment>
<reference key="1">
    <citation type="journal article" date="2009" name="Vaccine">
        <title>Whole genome sequence analysis of Mycobacterium bovis bacillus Calmette-Guerin (BCG) Tokyo 172: a comparative study of BCG vaccine substrains.</title>
        <authorList>
            <person name="Seki M."/>
            <person name="Honda I."/>
            <person name="Fujita I."/>
            <person name="Yano I."/>
            <person name="Yamamoto S."/>
            <person name="Koyama A."/>
        </authorList>
    </citation>
    <scope>NUCLEOTIDE SEQUENCE [LARGE SCALE GENOMIC DNA]</scope>
    <source>
        <strain>BCG / Tokyo 172 / ATCC 35737 / TMC 1019</strain>
    </source>
</reference>
<accession>C1AMV2</accession>
<dbReference type="EC" id="7.1.2.2" evidence="1"/>
<dbReference type="EMBL" id="AP010918">
    <property type="protein sequence ID" value="BAH25631.1"/>
    <property type="molecule type" value="Genomic_DNA"/>
</dbReference>
<dbReference type="RefSeq" id="WP_003406699.1">
    <property type="nucleotide sequence ID" value="NZ_CP014566.1"/>
</dbReference>
<dbReference type="SMR" id="C1AMV2"/>
<dbReference type="KEGG" id="mbt:JTY_1343"/>
<dbReference type="HOGENOM" id="CLU_010091_2_1_11"/>
<dbReference type="GO" id="GO:0005886">
    <property type="term" value="C:plasma membrane"/>
    <property type="evidence" value="ECO:0007669"/>
    <property type="project" value="UniProtKB-SubCell"/>
</dbReference>
<dbReference type="GO" id="GO:0045259">
    <property type="term" value="C:proton-transporting ATP synthase complex"/>
    <property type="evidence" value="ECO:0007669"/>
    <property type="project" value="UniProtKB-KW"/>
</dbReference>
<dbReference type="GO" id="GO:0043531">
    <property type="term" value="F:ADP binding"/>
    <property type="evidence" value="ECO:0007669"/>
    <property type="project" value="TreeGrafter"/>
</dbReference>
<dbReference type="GO" id="GO:0005524">
    <property type="term" value="F:ATP binding"/>
    <property type="evidence" value="ECO:0007669"/>
    <property type="project" value="UniProtKB-UniRule"/>
</dbReference>
<dbReference type="GO" id="GO:0046933">
    <property type="term" value="F:proton-transporting ATP synthase activity, rotational mechanism"/>
    <property type="evidence" value="ECO:0007669"/>
    <property type="project" value="UniProtKB-UniRule"/>
</dbReference>
<dbReference type="CDD" id="cd18113">
    <property type="entry name" value="ATP-synt_F1_alpha_C"/>
    <property type="match status" value="1"/>
</dbReference>
<dbReference type="CDD" id="cd18116">
    <property type="entry name" value="ATP-synt_F1_alpha_N"/>
    <property type="match status" value="1"/>
</dbReference>
<dbReference type="CDD" id="cd01132">
    <property type="entry name" value="F1-ATPase_alpha_CD"/>
    <property type="match status" value="1"/>
</dbReference>
<dbReference type="FunFam" id="1.20.150.20:FF:000001">
    <property type="entry name" value="ATP synthase subunit alpha"/>
    <property type="match status" value="1"/>
</dbReference>
<dbReference type="FunFam" id="2.40.30.20:FF:000001">
    <property type="entry name" value="ATP synthase subunit alpha"/>
    <property type="match status" value="1"/>
</dbReference>
<dbReference type="FunFam" id="3.40.50.300:FF:000002">
    <property type="entry name" value="ATP synthase subunit alpha"/>
    <property type="match status" value="1"/>
</dbReference>
<dbReference type="Gene3D" id="2.40.30.20">
    <property type="match status" value="1"/>
</dbReference>
<dbReference type="Gene3D" id="1.20.150.20">
    <property type="entry name" value="ATP synthase alpha/beta chain, C-terminal domain"/>
    <property type="match status" value="1"/>
</dbReference>
<dbReference type="Gene3D" id="3.40.50.300">
    <property type="entry name" value="P-loop containing nucleotide triphosphate hydrolases"/>
    <property type="match status" value="1"/>
</dbReference>
<dbReference type="HAMAP" id="MF_01346">
    <property type="entry name" value="ATP_synth_alpha_bact"/>
    <property type="match status" value="1"/>
</dbReference>
<dbReference type="InterPro" id="IPR023366">
    <property type="entry name" value="ATP_synth_asu-like_sf"/>
</dbReference>
<dbReference type="InterPro" id="IPR000793">
    <property type="entry name" value="ATP_synth_asu_C"/>
</dbReference>
<dbReference type="InterPro" id="IPR038376">
    <property type="entry name" value="ATP_synth_asu_C_sf"/>
</dbReference>
<dbReference type="InterPro" id="IPR033732">
    <property type="entry name" value="ATP_synth_F1_a_nt-bd_dom"/>
</dbReference>
<dbReference type="InterPro" id="IPR005294">
    <property type="entry name" value="ATP_synth_F1_asu"/>
</dbReference>
<dbReference type="InterPro" id="IPR020003">
    <property type="entry name" value="ATPase_a/bsu_AS"/>
</dbReference>
<dbReference type="InterPro" id="IPR004100">
    <property type="entry name" value="ATPase_F1/V1/A1_a/bsu_N"/>
</dbReference>
<dbReference type="InterPro" id="IPR036121">
    <property type="entry name" value="ATPase_F1/V1/A1_a/bsu_N_sf"/>
</dbReference>
<dbReference type="InterPro" id="IPR000194">
    <property type="entry name" value="ATPase_F1/V1/A1_a/bsu_nucl-bd"/>
</dbReference>
<dbReference type="InterPro" id="IPR027417">
    <property type="entry name" value="P-loop_NTPase"/>
</dbReference>
<dbReference type="NCBIfam" id="TIGR00962">
    <property type="entry name" value="atpA"/>
    <property type="match status" value="1"/>
</dbReference>
<dbReference type="NCBIfam" id="NF009884">
    <property type="entry name" value="PRK13343.1"/>
    <property type="match status" value="1"/>
</dbReference>
<dbReference type="PANTHER" id="PTHR48082">
    <property type="entry name" value="ATP SYNTHASE SUBUNIT ALPHA, MITOCHONDRIAL"/>
    <property type="match status" value="1"/>
</dbReference>
<dbReference type="PANTHER" id="PTHR48082:SF2">
    <property type="entry name" value="ATP SYNTHASE SUBUNIT ALPHA, MITOCHONDRIAL"/>
    <property type="match status" value="1"/>
</dbReference>
<dbReference type="Pfam" id="PF00006">
    <property type="entry name" value="ATP-synt_ab"/>
    <property type="match status" value="1"/>
</dbReference>
<dbReference type="Pfam" id="PF00306">
    <property type="entry name" value="ATP-synt_ab_C"/>
    <property type="match status" value="1"/>
</dbReference>
<dbReference type="Pfam" id="PF02874">
    <property type="entry name" value="ATP-synt_ab_N"/>
    <property type="match status" value="1"/>
</dbReference>
<dbReference type="PIRSF" id="PIRSF039088">
    <property type="entry name" value="F_ATPase_subunit_alpha"/>
    <property type="match status" value="1"/>
</dbReference>
<dbReference type="SUPFAM" id="SSF47917">
    <property type="entry name" value="C-terminal domain of alpha and beta subunits of F1 ATP synthase"/>
    <property type="match status" value="1"/>
</dbReference>
<dbReference type="SUPFAM" id="SSF50615">
    <property type="entry name" value="N-terminal domain of alpha and beta subunits of F1 ATP synthase"/>
    <property type="match status" value="1"/>
</dbReference>
<dbReference type="SUPFAM" id="SSF52540">
    <property type="entry name" value="P-loop containing nucleoside triphosphate hydrolases"/>
    <property type="match status" value="1"/>
</dbReference>
<dbReference type="PROSITE" id="PS00152">
    <property type="entry name" value="ATPASE_ALPHA_BETA"/>
    <property type="match status" value="1"/>
</dbReference>
<name>ATPA_MYCBT</name>
<proteinExistence type="inferred from homology"/>
<organism>
    <name type="scientific">Mycobacterium bovis (strain BCG / Tokyo 172 / ATCC 35737 / TMC 1019)</name>
    <dbReference type="NCBI Taxonomy" id="561275"/>
    <lineage>
        <taxon>Bacteria</taxon>
        <taxon>Bacillati</taxon>
        <taxon>Actinomycetota</taxon>
        <taxon>Actinomycetes</taxon>
        <taxon>Mycobacteriales</taxon>
        <taxon>Mycobacteriaceae</taxon>
        <taxon>Mycobacterium</taxon>
        <taxon>Mycobacterium tuberculosis complex</taxon>
    </lineage>
</organism>
<keyword id="KW-0066">ATP synthesis</keyword>
<keyword id="KW-0067">ATP-binding</keyword>
<keyword id="KW-1003">Cell membrane</keyword>
<keyword id="KW-0139">CF(1)</keyword>
<keyword id="KW-0375">Hydrogen ion transport</keyword>
<keyword id="KW-0406">Ion transport</keyword>
<keyword id="KW-0472">Membrane</keyword>
<keyword id="KW-0547">Nucleotide-binding</keyword>
<keyword id="KW-1278">Translocase</keyword>
<keyword id="KW-0813">Transport</keyword>
<protein>
    <recommendedName>
        <fullName evidence="1">ATP synthase subunit alpha</fullName>
        <ecNumber evidence="1">7.1.2.2</ecNumber>
    </recommendedName>
    <alternativeName>
        <fullName evidence="1">ATP synthase F1 sector subunit alpha</fullName>
    </alternativeName>
    <alternativeName>
        <fullName evidence="1">F-ATPase subunit alpha</fullName>
    </alternativeName>
</protein>
<gene>
    <name evidence="1" type="primary">atpA</name>
    <name type="ordered locus">JTY_1343</name>
</gene>